<name>PYTB_ASPTN</name>
<evidence type="ECO:0000255" key="1"/>
<evidence type="ECO:0000255" key="2">
    <source>
        <dbReference type="PROSITE-ProRule" id="PRU00498"/>
    </source>
</evidence>
<evidence type="ECO:0000255" key="3">
    <source>
        <dbReference type="PROSITE-ProRule" id="PRU00718"/>
    </source>
</evidence>
<evidence type="ECO:0000269" key="4">
    <source>
    </source>
</evidence>
<evidence type="ECO:0000303" key="5">
    <source>
    </source>
</evidence>
<evidence type="ECO:0000305" key="6"/>
<evidence type="ECO:0000305" key="7">
    <source>
    </source>
</evidence>
<sequence length="807" mass="87872">MRFLGIAAVATFSTVVSAYPKSTALYNCVSSVFGPSAPQRIVTPNDTTYLDSRLGETIQFDELPVLLAYAQESKEIAPLIRCAKTAGIKAVPRAGGHSFEAYSALNGTLIIDIAHLNYVNVSDDRQTAVVGAGIRLGALYTALSEHGTSFIGGICPTVGLAGFLGSGGFNMQQRSQGLAVEHVLAAKVVLADGRTVVASPDTNPDLFFAIRGGGGGTYGIVVEFTLSLTSIPRSAMLMLSWNDTASRFPAAKQYLDWAPKQIPEFMSQINVYRDKVQVLGWYYGGTEDELRSLVNASGLLDIGKPAVVIAGGCNTDNARAFGYTTMECLPDGKVDVSILNVVPDPFSKVGNSTQFKWNEVPKSTSMPVADPWQRFHRMSKSFFVLKDNPLTDQTLQSLLDRIASLDAKSQVWGEWHAWNISTPSKGSGNAFAWREKAYAHLEFQIHGAPDDKERQSTYENWLEDLESYLRPTVGGASYSGYLDADISTDPLTSYYGGNVCKLVSVKRKTENDYSSSTVEQLFIDSDVNARKITSRYPIPPPDKSIKTEDITLQDCWVRIYTPPSATSSGSVAVFIHGGGWIMGSPDIEDATCRRICRCSGMTVVSVGYRLAPKFQFPTGLNDCVRATLWTLGHFPVSALVIMGGSAGANLAFGVALKLVDAGLGEKVKGVLALVPATVHPDAVPADKRDQYTAMHENANNTVNTLAAMDCFLDAYAAPPHDKYFSVLLHPRLKDLKKVYLVECGTDTLRDDARLMRDALEEAGVPLMYDAYPGYPHYFWSYPSPVLAEASESFHENMLQALAWLDQE</sequence>
<accession>Q0CZH0</accession>
<comment type="function">
    <text evidence="4 7">FAD-linked oxidoreductase; part of the gene cluster that mediates the biosynthesis of pyranterreones, a family of antioxidative compounds (PubMed:32077283). The first step of pyranonigrins biosynthesis is performed by the hybrid PKS-NRPS synthetase pytA that condenses 4 malonyl-CoA units ato the acetyl starter unit by the modular PKS of pytA (PubMed:32077283). The acyl chain is then connected to an L-serine through the amide bond by the modular NRPS of pytA (PubMed:32077283). A tetramic acid is formed and released from the PKS-NRPS pytA to give pyranterreone 5 with the help of the thioesterase pytI (PubMed:32077283). Pyranterreone 5 could be methylated by pytC to afford pyranterreone 6 (Probable). Both pyranterreones 5 and 6 are subsequently oxidized by the FAD-linked oxidoreductase pytB and the cytochrome P450 monooxygenase pytD to form the fused gamma-pyrone core, resulting in pyranterreones 7 and 11, respectively (PubMed:32077283). The hydroxy group at C-8 of pyranterreones 7 and 11 are dehydrated by the aspartyl protease pytH to form a delta-7 double bond to give pyranterreones 3 and 1, 2 accordingly (PubMed:32077283). The exo-methylene of pyranterreone 3 could be reduced into a pendant methyl by reductase pytE to provide pyranterreone 4, also known as cordylactam (Probable). Pyranterreone 4 can be reconverted to pyranterreone 3 through pytB-catalyzed dehydrogenation or further oxidized to pyranterreones 9 and 10 (Probable).</text>
</comment>
<comment type="cofactor">
    <cofactor evidence="6">
        <name>FAD</name>
        <dbReference type="ChEBI" id="CHEBI:57692"/>
    </cofactor>
</comment>
<comment type="pathway">
    <text evidence="4">Secondary metabolite biosynthesis.</text>
</comment>
<comment type="induction">
    <text evidence="4">Expression is positively regulated by the cluster-specific transcription factor pytR.</text>
</comment>
<comment type="disruption phenotype">
    <text evidence="4">Abolishes the production of most pyranterreones, but accumulates pyranterreones 9 and 10.</text>
</comment>
<comment type="similarity">
    <text evidence="6">Belongs to the oxygen-dependent FAD-linked oxidoreductase family.</text>
</comment>
<dbReference type="EC" id="1.1.1.-" evidence="7"/>
<dbReference type="EMBL" id="CH476594">
    <property type="protein sequence ID" value="EAU39560.1"/>
    <property type="molecule type" value="Genomic_DNA"/>
</dbReference>
<dbReference type="RefSeq" id="XP_001211000.1">
    <property type="nucleotide sequence ID" value="XM_001211000.1"/>
</dbReference>
<dbReference type="SMR" id="Q0CZH0"/>
<dbReference type="STRING" id="341663.Q0CZH0"/>
<dbReference type="ESTHER" id="asptn-pytb">
    <property type="family name" value="Hormone-sensitive_lipase_like"/>
</dbReference>
<dbReference type="GlyCosmos" id="Q0CZH0">
    <property type="glycosylation" value="8 sites, No reported glycans"/>
</dbReference>
<dbReference type="EnsemblFungi" id="EAU39560">
    <property type="protein sequence ID" value="EAU39560"/>
    <property type="gene ID" value="ATEG_00914"/>
</dbReference>
<dbReference type="GeneID" id="4355677"/>
<dbReference type="VEuPathDB" id="FungiDB:ATEG_00914"/>
<dbReference type="eggNOG" id="KOG1515">
    <property type="taxonomic scope" value="Eukaryota"/>
</dbReference>
<dbReference type="HOGENOM" id="CLU_349150_0_0_1"/>
<dbReference type="OrthoDB" id="407275at2759"/>
<dbReference type="Proteomes" id="UP000007963">
    <property type="component" value="Unassembled WGS sequence"/>
</dbReference>
<dbReference type="GO" id="GO:0071949">
    <property type="term" value="F:FAD binding"/>
    <property type="evidence" value="ECO:0007669"/>
    <property type="project" value="InterPro"/>
</dbReference>
<dbReference type="GO" id="GO:0016787">
    <property type="term" value="F:hydrolase activity"/>
    <property type="evidence" value="ECO:0007669"/>
    <property type="project" value="InterPro"/>
</dbReference>
<dbReference type="GO" id="GO:0016491">
    <property type="term" value="F:oxidoreductase activity"/>
    <property type="evidence" value="ECO:0007669"/>
    <property type="project" value="UniProtKB-KW"/>
</dbReference>
<dbReference type="Gene3D" id="3.30.465.10">
    <property type="match status" value="2"/>
</dbReference>
<dbReference type="Gene3D" id="3.40.462.20">
    <property type="match status" value="1"/>
</dbReference>
<dbReference type="Gene3D" id="3.40.50.1820">
    <property type="entry name" value="alpha/beta hydrolase"/>
    <property type="match status" value="1"/>
</dbReference>
<dbReference type="InterPro" id="IPR013094">
    <property type="entry name" value="AB_hydrolase_3"/>
</dbReference>
<dbReference type="InterPro" id="IPR029058">
    <property type="entry name" value="AB_hydrolase_fold"/>
</dbReference>
<dbReference type="InterPro" id="IPR016166">
    <property type="entry name" value="FAD-bd_PCMH"/>
</dbReference>
<dbReference type="InterPro" id="IPR036318">
    <property type="entry name" value="FAD-bd_PCMH-like_sf"/>
</dbReference>
<dbReference type="InterPro" id="IPR016169">
    <property type="entry name" value="FAD-bd_PCMH_sub2"/>
</dbReference>
<dbReference type="InterPro" id="IPR050416">
    <property type="entry name" value="FAD-linked_Oxidoreductase"/>
</dbReference>
<dbReference type="InterPro" id="IPR006094">
    <property type="entry name" value="Oxid_FAD_bind_N"/>
</dbReference>
<dbReference type="PANTHER" id="PTHR42973">
    <property type="entry name" value="BINDING OXIDOREDUCTASE, PUTATIVE (AFU_ORTHOLOGUE AFUA_1G17690)-RELATED"/>
    <property type="match status" value="1"/>
</dbReference>
<dbReference type="PANTHER" id="PTHR42973:SF39">
    <property type="entry name" value="FAD-BINDING PCMH-TYPE DOMAIN-CONTAINING PROTEIN"/>
    <property type="match status" value="1"/>
</dbReference>
<dbReference type="Pfam" id="PF07859">
    <property type="entry name" value="Abhydrolase_3"/>
    <property type="match status" value="1"/>
</dbReference>
<dbReference type="Pfam" id="PF01565">
    <property type="entry name" value="FAD_binding_4"/>
    <property type="match status" value="1"/>
</dbReference>
<dbReference type="SUPFAM" id="SSF53474">
    <property type="entry name" value="alpha/beta-Hydrolases"/>
    <property type="match status" value="1"/>
</dbReference>
<dbReference type="SUPFAM" id="SSF56176">
    <property type="entry name" value="FAD-binding/transporter-associated domain-like"/>
    <property type="match status" value="1"/>
</dbReference>
<dbReference type="PROSITE" id="PS51387">
    <property type="entry name" value="FAD_PCMH"/>
    <property type="match status" value="1"/>
</dbReference>
<feature type="signal peptide" evidence="1">
    <location>
        <begin position="1"/>
        <end position="18"/>
    </location>
</feature>
<feature type="chain" id="PRO_5004170676" description="FAD-linked oxidoreductase pytB">
    <location>
        <begin position="19"/>
        <end position="807"/>
    </location>
</feature>
<feature type="domain" description="FAD-binding PCMH-type" evidence="3">
    <location>
        <begin position="60"/>
        <end position="231"/>
    </location>
</feature>
<feature type="glycosylation site" description="N-linked (GlcNAc...) asparagine" evidence="2">
    <location>
        <position position="45"/>
    </location>
</feature>
<feature type="glycosylation site" description="N-linked (GlcNAc...) asparagine" evidence="2">
    <location>
        <position position="106"/>
    </location>
</feature>
<feature type="glycosylation site" description="N-linked (GlcNAc...) asparagine" evidence="2">
    <location>
        <position position="120"/>
    </location>
</feature>
<feature type="glycosylation site" description="N-linked (GlcNAc...) asparagine" evidence="2">
    <location>
        <position position="242"/>
    </location>
</feature>
<feature type="glycosylation site" description="N-linked (GlcNAc...) asparagine" evidence="2">
    <location>
        <position position="295"/>
    </location>
</feature>
<feature type="glycosylation site" description="N-linked (GlcNAc...) asparagine" evidence="2">
    <location>
        <position position="351"/>
    </location>
</feature>
<feature type="glycosylation site" description="N-linked (GlcNAc...) asparagine" evidence="2">
    <location>
        <position position="419"/>
    </location>
</feature>
<feature type="glycosylation site" description="N-linked (GlcNAc...) asparagine" evidence="2">
    <location>
        <position position="699"/>
    </location>
</feature>
<reference key="1">
    <citation type="submission" date="2005-09" db="EMBL/GenBank/DDBJ databases">
        <title>Annotation of the Aspergillus terreus NIH2624 genome.</title>
        <authorList>
            <person name="Birren B.W."/>
            <person name="Lander E.S."/>
            <person name="Galagan J.E."/>
            <person name="Nusbaum C."/>
            <person name="Devon K."/>
            <person name="Henn M."/>
            <person name="Ma L.-J."/>
            <person name="Jaffe D.B."/>
            <person name="Butler J."/>
            <person name="Alvarez P."/>
            <person name="Gnerre S."/>
            <person name="Grabherr M."/>
            <person name="Kleber M."/>
            <person name="Mauceli E.W."/>
            <person name="Brockman W."/>
            <person name="Rounsley S."/>
            <person name="Young S.K."/>
            <person name="LaButti K."/>
            <person name="Pushparaj V."/>
            <person name="DeCaprio D."/>
            <person name="Crawford M."/>
            <person name="Koehrsen M."/>
            <person name="Engels R."/>
            <person name="Montgomery P."/>
            <person name="Pearson M."/>
            <person name="Howarth C."/>
            <person name="Larson L."/>
            <person name="Luoma S."/>
            <person name="White J."/>
            <person name="Alvarado L."/>
            <person name="Kodira C.D."/>
            <person name="Zeng Q."/>
            <person name="Oleary S."/>
            <person name="Yandava C."/>
            <person name="Denning D.W."/>
            <person name="Nierman W.C."/>
            <person name="Milne T."/>
            <person name="Madden K."/>
        </authorList>
    </citation>
    <scope>NUCLEOTIDE SEQUENCE [LARGE SCALE GENOMIC DNA]</scope>
    <source>
        <strain>NIH 2624 / FGSC A1156</strain>
    </source>
</reference>
<reference key="2">
    <citation type="journal article" date="2020" name="J. Nat. Prod.">
        <title>Discovery and characterization of a PKS-NRPS hybrid in Aspergillus terreus by genome mining.</title>
        <authorList>
            <person name="Tang S."/>
            <person name="Zhang W."/>
            <person name="Li Z."/>
            <person name="Li H."/>
            <person name="Geng C."/>
            <person name="Huang X."/>
            <person name="Lu X."/>
        </authorList>
    </citation>
    <scope>INDUCTION</scope>
    <scope>FUNCTION</scope>
    <scope>DISRUPTION PHENOTYPE</scope>
    <scope>PATHWAY</scope>
</reference>
<protein>
    <recommendedName>
        <fullName evidence="5">FAD-linked oxidoreductase pytB</fullName>
        <ecNumber evidence="7">1.1.1.-</ecNumber>
    </recommendedName>
    <alternativeName>
        <fullName evidence="5">Pyranterreones biosynthesis cluster protein B</fullName>
    </alternativeName>
</protein>
<proteinExistence type="evidence at transcript level"/>
<keyword id="KW-0274">FAD</keyword>
<keyword id="KW-0285">Flavoprotein</keyword>
<keyword id="KW-0325">Glycoprotein</keyword>
<keyword id="KW-0560">Oxidoreductase</keyword>
<keyword id="KW-1185">Reference proteome</keyword>
<keyword id="KW-0732">Signal</keyword>
<organism>
    <name type="scientific">Aspergillus terreus (strain NIH 2624 / FGSC A1156)</name>
    <dbReference type="NCBI Taxonomy" id="341663"/>
    <lineage>
        <taxon>Eukaryota</taxon>
        <taxon>Fungi</taxon>
        <taxon>Dikarya</taxon>
        <taxon>Ascomycota</taxon>
        <taxon>Pezizomycotina</taxon>
        <taxon>Eurotiomycetes</taxon>
        <taxon>Eurotiomycetidae</taxon>
        <taxon>Eurotiales</taxon>
        <taxon>Aspergillaceae</taxon>
        <taxon>Aspergillus</taxon>
        <taxon>Aspergillus subgen. Circumdati</taxon>
    </lineage>
</organism>
<gene>
    <name evidence="5" type="primary">pytB</name>
    <name type="ORF">ATEG_00914</name>
</gene>